<protein>
    <recommendedName>
        <fullName evidence="1">Protein P</fullName>
    </recommendedName>
    <domain>
        <recommendedName>
            <fullName evidence="1">DNA-directed DNA polymerase</fullName>
            <ecNumber evidence="1">2.7.7.7</ecNumber>
        </recommendedName>
    </domain>
    <domain>
        <recommendedName>
            <fullName evidence="1">RNA-directed DNA polymerase</fullName>
            <ecNumber evidence="1">2.7.7.49</ecNumber>
        </recommendedName>
    </domain>
    <domain>
        <recommendedName>
            <fullName evidence="1">Ribonuclease H</fullName>
            <ecNumber evidence="1">3.1.26.4</ecNumber>
        </recommendedName>
    </domain>
</protein>
<name>DPOL_HBVA9</name>
<comment type="function">
    <text evidence="1">Multifunctional enzyme that converts the viral RNA genome into dsDNA in viral cytoplasmic capsids. This enzyme displays a DNA polymerase activity that can copy either DNA or RNA templates, and a ribonuclease H (RNase H) activity that cleaves the RNA strand of RNA-DNA heteroduplexes in a partially processive 3'- to 5'-endonucleasic mode. Neo-synthesized pregenomic RNA (pgRNA) are encapsidated together with the P protein, and reverse-transcribed inside the nucleocapsid. Initiation of reverse-transcription occurs first by binding the epsilon loop on the pgRNA genome, and is initiated by protein priming, thereby the 5'-end of (-)DNA is covalently linked to P protein. Partial (+)DNA is synthesized from the (-)DNA template and generates the relaxed circular DNA (RC-DNA) genome. After budding and infection, the RC-DNA migrates in the nucleus, and is converted into a plasmid-like covalently closed circular DNA (cccDNA). The activity of P protein does not seem to be necessary for cccDNA generation, and is presumably released from (+)DNA by host nuclear DNA repair machinery.</text>
</comment>
<comment type="catalytic activity">
    <reaction evidence="1">
        <text>DNA(n) + a 2'-deoxyribonucleoside 5'-triphosphate = DNA(n+1) + diphosphate</text>
        <dbReference type="Rhea" id="RHEA:22508"/>
        <dbReference type="Rhea" id="RHEA-COMP:17339"/>
        <dbReference type="Rhea" id="RHEA-COMP:17340"/>
        <dbReference type="ChEBI" id="CHEBI:33019"/>
        <dbReference type="ChEBI" id="CHEBI:61560"/>
        <dbReference type="ChEBI" id="CHEBI:173112"/>
        <dbReference type="EC" id="2.7.7.7"/>
    </reaction>
</comment>
<comment type="catalytic activity">
    <reaction evidence="1">
        <text>DNA(n) + a 2'-deoxyribonucleoside 5'-triphosphate = DNA(n+1) + diphosphate</text>
        <dbReference type="Rhea" id="RHEA:22508"/>
        <dbReference type="Rhea" id="RHEA-COMP:17339"/>
        <dbReference type="Rhea" id="RHEA-COMP:17340"/>
        <dbReference type="ChEBI" id="CHEBI:33019"/>
        <dbReference type="ChEBI" id="CHEBI:61560"/>
        <dbReference type="ChEBI" id="CHEBI:173112"/>
        <dbReference type="EC" id="2.7.7.49"/>
    </reaction>
</comment>
<comment type="catalytic activity">
    <reaction evidence="1">
        <text>Endonucleolytic cleavage to 5'-phosphomonoester.</text>
        <dbReference type="EC" id="3.1.26.4"/>
    </reaction>
</comment>
<comment type="activity regulation">
    <text evidence="1">Activated by host HSP70 and HSP40 in vitro to be able to bind the epsilon loop of the pgRNA. Because deletion of the RNase H region renders the protein partly chaperone-independent, the chaperones may be needed indirectly to relieve occlusion of the RNA-binding site by this domain. Inhibited by several reverse-transcriptase inhibitors: Lamivudine, Adefovir and Entecavir.</text>
</comment>
<comment type="domain">
    <text evidence="1">Terminal protein domain (TP) is hepadnavirus-specific. Spacer domain is highly variable and separates the TP and RT domains. Polymerase/reverse-transcriptase domain (RT) and ribonuclease H domain (RH) are similar to retrovirus reverse transcriptase/RNase H.</text>
</comment>
<comment type="domain">
    <text evidence="1">The polymerase/reverse transcriptase (RT) and ribonuclease H (RH) domains are structured in five subdomains: finger, palm, thumb, connection and RNase H. Within the palm subdomain, the 'primer grip' region is thought to be involved in the positioning of the primer terminus for accommodating the incoming nucleotide. The RH domain stabilizes the association of RT with primer-template.</text>
</comment>
<comment type="miscellaneous">
    <text evidence="1">Hepadnaviral virions contain probably just one P protein molecule per particle.</text>
</comment>
<comment type="similarity">
    <text evidence="1">Belongs to the hepadnaviridae P protein family.</text>
</comment>
<proteinExistence type="inferred from homology"/>
<sequence>MPLSYQHFRKLLLLDDGTEVGPLEEELPRLADEDLNRRVAEDLNLGNLNVSIPWTHKVGNFTGLYSSTVPIFNQEWQTPSFPKIHLHEDIINRCQQFVGPLNVNEKRRLKLIMPARFYPNSTKYLPLDKGIKPYYPGHVVNHYFQARHYLHTLWKAGILYKRETTRSASFCGSPYSWEQELHHGRSVTKTSQRHGDESFCSQPSGILSRSSVGPCIRSQLKQPRLGLQPHQGPLATSQSGRSGSIWARVHPSTRRSSGVEPSGSGHIDYSASSSSSCLHQSAVRKTAYSHLSTSKRQSSSGHAVEFHKVPPNSARSQSQGPVFSCWWLQFRNSQPCSEYCLSHLVNLLEDWGPCADHGEHHIRIPRTPARVTGGVFLVDKNPHNTAESRLVVDFSQFSRGSTRVSWPKFAVPNLQSLTNLLSSNLSWLSLDVSAAFYHIPLHPAAMPHLLIGSSGLSRYVARLSSNSRIHNHQYGTLQNLHDSCSRQLYVSLMLLYKTYGRKLHLYSHPIILGFRKIPMGVGLSPFLLAQFTSAICSVVRRAFPHCLAFSYMDDVVLGAKSVQHLESLYTAVTNFLLSLGIHLNPNKTKRWGYSLNFMGYIIGSWGSLPQDHIVQKLKHCFRKLPVNRPIDWKVCQRIVGLLGFAAPFTQCGYPALMPLYACIQARQAFTFSPTYKAFLSKQYMNLYPVARQRPGLCQVFADATPTGWGLAIGHQRMRGTFVAPLPIHTAELLAACFARSRSGATLIGTDNSVVLSRKYTSFPWLLGCTANWILRGTSFVYVPSALNPADDPSRGRLGLYRPLLRLPYRPTTGRTSLYAVSPSVPSHLPDRVHFASPLHVAWRPP</sequence>
<keyword id="KW-0235">DNA replication</keyword>
<keyword id="KW-0238">DNA-binding</keyword>
<keyword id="KW-0239">DNA-directed DNA polymerase</keyword>
<keyword id="KW-0255">Endonuclease</keyword>
<keyword id="KW-0945">Host-virus interaction</keyword>
<keyword id="KW-0378">Hydrolase</keyword>
<keyword id="KW-1090">Inhibition of host innate immune response by virus</keyword>
<keyword id="KW-1113">Inhibition of host RLR pathway by virus</keyword>
<keyword id="KW-0460">Magnesium</keyword>
<keyword id="KW-0479">Metal-binding</keyword>
<keyword id="KW-0511">Multifunctional enzyme</keyword>
<keyword id="KW-0540">Nuclease</keyword>
<keyword id="KW-0548">Nucleotidyltransferase</keyword>
<keyword id="KW-0695">RNA-directed DNA polymerase</keyword>
<keyword id="KW-0808">Transferase</keyword>
<keyword id="KW-0899">Viral immunoevasion</keyword>
<accession>Q4R1R9</accession>
<reference key="1">
    <citation type="journal article" date="2005" name="J. Gen. Virol.">
        <title>A new subtype (subgenotype) Ac (A3) of hepatitis B virus and recombination between genotypes A and E in Cameroon.</title>
        <authorList>
            <person name="Kurbanov F."/>
            <person name="Tanaka Y."/>
            <person name="Fujiwara K."/>
            <person name="Sugauchi F."/>
            <person name="Mbanya D."/>
            <person name="Zekeng L."/>
            <person name="Ndembi N."/>
            <person name="Ngansop C."/>
            <person name="Kaptue L."/>
            <person name="Miura T."/>
            <person name="Ido E."/>
            <person name="Hayami M."/>
            <person name="Ichimura H."/>
            <person name="Mizokami M."/>
        </authorList>
    </citation>
    <scope>NUCLEOTIDE SEQUENCE [GENOMIC DNA]</scope>
</reference>
<reference key="2">
    <citation type="journal article" date="2007" name="World J. Gastroenterol.">
        <title>Hepatitis B virus replication.</title>
        <authorList>
            <person name="Beck J."/>
            <person name="Nassal M."/>
        </authorList>
    </citation>
    <scope>REVIEW</scope>
</reference>
<evidence type="ECO:0000255" key="1">
    <source>
        <dbReference type="HAMAP-Rule" id="MF_04073"/>
    </source>
</evidence>
<evidence type="ECO:0000256" key="2">
    <source>
        <dbReference type="SAM" id="MobiDB-lite"/>
    </source>
</evidence>
<organism>
    <name type="scientific">Hepatitis B virus genotype A3 (isolate Cameroon/CMR711/1994)</name>
    <name type="common">HBV-A</name>
    <dbReference type="NCBI Taxonomy" id="489459"/>
    <lineage>
        <taxon>Viruses</taxon>
        <taxon>Riboviria</taxon>
        <taxon>Pararnavirae</taxon>
        <taxon>Artverviricota</taxon>
        <taxon>Revtraviricetes</taxon>
        <taxon>Blubervirales</taxon>
        <taxon>Hepadnaviridae</taxon>
        <taxon>Orthohepadnavirus</taxon>
        <taxon>Hepatitis B virus</taxon>
    </lineage>
</organism>
<organismHost>
    <name type="scientific">Homo sapiens</name>
    <name type="common">Human</name>
    <dbReference type="NCBI Taxonomy" id="9606"/>
</organismHost>
<organismHost>
    <name type="scientific">Pan troglodytes</name>
    <name type="common">Chimpanzee</name>
    <dbReference type="NCBI Taxonomy" id="9598"/>
</organismHost>
<gene>
    <name evidence="1" type="primary">P</name>
</gene>
<feature type="chain" id="PRO_0000323254" description="Protein P">
    <location>
        <begin position="1"/>
        <end position="845"/>
    </location>
</feature>
<feature type="domain" description="Reverse transcriptase" evidence="1">
    <location>
        <begin position="359"/>
        <end position="602"/>
    </location>
</feature>
<feature type="region of interest" description="Terminal protein domain (TP)" evidence="1">
    <location>
        <begin position="1"/>
        <end position="179"/>
    </location>
</feature>
<feature type="region of interest" description="Spacer" evidence="1">
    <location>
        <begin position="180"/>
        <end position="348"/>
    </location>
</feature>
<feature type="region of interest" description="Disordered" evidence="2">
    <location>
        <begin position="186"/>
        <end position="205"/>
    </location>
</feature>
<feature type="region of interest" description="Disordered" evidence="2">
    <location>
        <begin position="222"/>
        <end position="245"/>
    </location>
</feature>
<feature type="region of interest" description="Disordered" evidence="2">
    <location>
        <begin position="288"/>
        <end position="318"/>
    </location>
</feature>
<feature type="region of interest" description="Polymerase/reverse transcriptase domain (RT)" evidence="1">
    <location>
        <begin position="349"/>
        <end position="692"/>
    </location>
</feature>
<feature type="compositionally biased region" description="Polar residues" evidence="2">
    <location>
        <begin position="289"/>
        <end position="301"/>
    </location>
</feature>
<feature type="binding site" evidence="1">
    <location>
        <position position="431"/>
    </location>
    <ligand>
        <name>Mg(2+)</name>
        <dbReference type="ChEBI" id="CHEBI:18420"/>
        <note>catalytic</note>
    </ligand>
</feature>
<feature type="binding site" evidence="1">
    <location>
        <position position="553"/>
    </location>
    <ligand>
        <name>Mg(2+)</name>
        <dbReference type="ChEBI" id="CHEBI:18420"/>
        <note>catalytic</note>
    </ligand>
</feature>
<feature type="binding site" evidence="1">
    <location>
        <position position="554"/>
    </location>
    <ligand>
        <name>Mg(2+)</name>
        <dbReference type="ChEBI" id="CHEBI:18420"/>
        <note>catalytic</note>
    </ligand>
</feature>
<feature type="site" description="Priming of reverse-transcription by covalently linking the first nucleotide of the (-)DNA" evidence="1">
    <location>
        <position position="65"/>
    </location>
</feature>
<dbReference type="EC" id="2.7.7.7" evidence="1"/>
<dbReference type="EC" id="2.7.7.49" evidence="1"/>
<dbReference type="EC" id="3.1.26.4" evidence="1"/>
<dbReference type="EMBL" id="AB194952">
    <property type="protein sequence ID" value="BAE00097.1"/>
    <property type="molecule type" value="Genomic_DNA"/>
</dbReference>
<dbReference type="Proteomes" id="UP000007912">
    <property type="component" value="Genome"/>
</dbReference>
<dbReference type="GO" id="GO:0003677">
    <property type="term" value="F:DNA binding"/>
    <property type="evidence" value="ECO:0007669"/>
    <property type="project" value="UniProtKB-UniRule"/>
</dbReference>
<dbReference type="GO" id="GO:0003887">
    <property type="term" value="F:DNA-directed DNA polymerase activity"/>
    <property type="evidence" value="ECO:0007669"/>
    <property type="project" value="UniProtKB-UniRule"/>
</dbReference>
<dbReference type="GO" id="GO:0046872">
    <property type="term" value="F:metal ion binding"/>
    <property type="evidence" value="ECO:0007669"/>
    <property type="project" value="UniProtKB-UniRule"/>
</dbReference>
<dbReference type="GO" id="GO:0003964">
    <property type="term" value="F:RNA-directed DNA polymerase activity"/>
    <property type="evidence" value="ECO:0007669"/>
    <property type="project" value="UniProtKB-UniRule"/>
</dbReference>
<dbReference type="GO" id="GO:0004523">
    <property type="term" value="F:RNA-DNA hybrid ribonuclease activity"/>
    <property type="evidence" value="ECO:0007669"/>
    <property type="project" value="UniProtKB-UniRule"/>
</dbReference>
<dbReference type="GO" id="GO:0006260">
    <property type="term" value="P:DNA replication"/>
    <property type="evidence" value="ECO:0007669"/>
    <property type="project" value="UniProtKB-UniRule"/>
</dbReference>
<dbReference type="GO" id="GO:0052170">
    <property type="term" value="P:symbiont-mediated suppression of host innate immune response"/>
    <property type="evidence" value="ECO:0007669"/>
    <property type="project" value="UniProtKB-UniRule"/>
</dbReference>
<dbReference type="FunFam" id="3.30.70.270:FF:000009">
    <property type="entry name" value="Protein P"/>
    <property type="match status" value="1"/>
</dbReference>
<dbReference type="Gene3D" id="3.30.70.270">
    <property type="match status" value="1"/>
</dbReference>
<dbReference type="HAMAP" id="MF_04073">
    <property type="entry name" value="HBV_DPOL"/>
    <property type="match status" value="1"/>
</dbReference>
<dbReference type="InterPro" id="IPR043502">
    <property type="entry name" value="DNA/RNA_pol_sf"/>
</dbReference>
<dbReference type="InterPro" id="IPR001462">
    <property type="entry name" value="DNApol_viral_C"/>
</dbReference>
<dbReference type="InterPro" id="IPR000201">
    <property type="entry name" value="DNApol_viral_N"/>
</dbReference>
<dbReference type="InterPro" id="IPR037531">
    <property type="entry name" value="HBV_DPOL"/>
</dbReference>
<dbReference type="InterPro" id="IPR043128">
    <property type="entry name" value="Rev_trsase/Diguanyl_cyclase"/>
</dbReference>
<dbReference type="InterPro" id="IPR000477">
    <property type="entry name" value="RT_dom"/>
</dbReference>
<dbReference type="InterPro" id="IPR051320">
    <property type="entry name" value="Viral_Replic_Matur_Polypro"/>
</dbReference>
<dbReference type="PANTHER" id="PTHR33064:SF29">
    <property type="entry name" value="PEPTIDASE A2 DOMAIN-CONTAINING PROTEIN-RELATED"/>
    <property type="match status" value="1"/>
</dbReference>
<dbReference type="PANTHER" id="PTHR33064">
    <property type="entry name" value="POL PROTEIN"/>
    <property type="match status" value="1"/>
</dbReference>
<dbReference type="Pfam" id="PF00336">
    <property type="entry name" value="DNA_pol_viral_C"/>
    <property type="match status" value="1"/>
</dbReference>
<dbReference type="Pfam" id="PF00242">
    <property type="entry name" value="DNA_pol_viral_N"/>
    <property type="match status" value="1"/>
</dbReference>
<dbReference type="Pfam" id="PF00078">
    <property type="entry name" value="RVT_1"/>
    <property type="match status" value="1"/>
</dbReference>
<dbReference type="SUPFAM" id="SSF56672">
    <property type="entry name" value="DNA/RNA polymerases"/>
    <property type="match status" value="1"/>
</dbReference>
<dbReference type="PROSITE" id="PS50878">
    <property type="entry name" value="RT_POL"/>
    <property type="match status" value="1"/>
</dbReference>